<accession>B9IW43</accession>
<organism>
    <name type="scientific">Bacillus cereus (strain Q1)</name>
    <dbReference type="NCBI Taxonomy" id="361100"/>
    <lineage>
        <taxon>Bacteria</taxon>
        <taxon>Bacillati</taxon>
        <taxon>Bacillota</taxon>
        <taxon>Bacilli</taxon>
        <taxon>Bacillales</taxon>
        <taxon>Bacillaceae</taxon>
        <taxon>Bacillus</taxon>
        <taxon>Bacillus cereus group</taxon>
    </lineage>
</organism>
<protein>
    <recommendedName>
        <fullName evidence="1">Protein-glutamine gamma-glutamyltransferase</fullName>
        <ecNumber evidence="1">2.3.2.13</ecNumber>
    </recommendedName>
    <alternativeName>
        <fullName evidence="1">Transglutaminase</fullName>
        <shortName evidence="1">TGase</shortName>
    </alternativeName>
</protein>
<dbReference type="EC" id="2.3.2.13" evidence="1"/>
<dbReference type="EMBL" id="CP000227">
    <property type="protein sequence ID" value="ACM14180.1"/>
    <property type="molecule type" value="Genomic_DNA"/>
</dbReference>
<dbReference type="SMR" id="B9IW43"/>
<dbReference type="KEGG" id="bcq:BCQ_3752"/>
<dbReference type="HOGENOM" id="CLU_088922_0_0_9"/>
<dbReference type="Proteomes" id="UP000000441">
    <property type="component" value="Chromosome"/>
</dbReference>
<dbReference type="GO" id="GO:0003810">
    <property type="term" value="F:protein-glutamine gamma-glutamyltransferase activity"/>
    <property type="evidence" value="ECO:0007669"/>
    <property type="project" value="UniProtKB-UniRule"/>
</dbReference>
<dbReference type="GO" id="GO:0030435">
    <property type="term" value="P:sporulation resulting in formation of a cellular spore"/>
    <property type="evidence" value="ECO:0007669"/>
    <property type="project" value="UniProtKB-UniRule"/>
</dbReference>
<dbReference type="HAMAP" id="MF_00727">
    <property type="entry name" value="Tgl"/>
    <property type="match status" value="1"/>
</dbReference>
<dbReference type="InterPro" id="IPR020916">
    <property type="entry name" value="Gln_gamma-glutamylTfrase_bac"/>
</dbReference>
<dbReference type="NCBIfam" id="NF002869">
    <property type="entry name" value="PRK03187.1"/>
    <property type="match status" value="1"/>
</dbReference>
<dbReference type="Pfam" id="PF20085">
    <property type="entry name" value="TGL"/>
    <property type="match status" value="1"/>
</dbReference>
<keyword id="KW-0012">Acyltransferase</keyword>
<keyword id="KW-0749">Sporulation</keyword>
<keyword id="KW-0808">Transferase</keyword>
<evidence type="ECO:0000255" key="1">
    <source>
        <dbReference type="HAMAP-Rule" id="MF_00727"/>
    </source>
</evidence>
<feature type="chain" id="PRO_1000197967" description="Protein-glutamine gamma-glutamyltransferase">
    <location>
        <begin position="1"/>
        <end position="276"/>
    </location>
</feature>
<sequence>MIVIGRSIVHPYITNEYEPFANEKQQILSIMAGNQEIYSFRTSGELSFDLNLRVNIITSALELFQSGFQFRTFQQSFCNPQYWKRTSLGGFELLPNIPPSIAIQDIFKNGKLYGTECATAMIIIFYKALLALYEEETFNRLFANLLLYTWDYDQDLKLITKTGGDLVPGDLVYFKNPQVNPATIEWQGENTIYLGNFFFYGHGVGVKTKEEIIYALNERRVPYAFISAFLTDTITRIDSRLMSYHASPSTPQTSIGFIPIRDDAIVATVGNTTTVY</sequence>
<gene>
    <name evidence="1" type="primary">tgl</name>
    <name type="ordered locus">BCQ_3752</name>
</gene>
<reference key="1">
    <citation type="journal article" date="2009" name="J. Bacteriol.">
        <title>Complete genome sequence of the extremophilic Bacillus cereus strain Q1 with industrial applications.</title>
        <authorList>
            <person name="Xiong Z."/>
            <person name="Jiang Y."/>
            <person name="Qi D."/>
            <person name="Lu H."/>
            <person name="Yang F."/>
            <person name="Yang J."/>
            <person name="Chen L."/>
            <person name="Sun L."/>
            <person name="Xu X."/>
            <person name="Xue Y."/>
            <person name="Zhu Y."/>
            <person name="Jin Q."/>
        </authorList>
    </citation>
    <scope>NUCLEOTIDE SEQUENCE [LARGE SCALE GENOMIC DNA]</scope>
    <source>
        <strain>Q1</strain>
    </source>
</reference>
<name>TGL_BACCQ</name>
<proteinExistence type="inferred from homology"/>
<comment type="function">
    <text evidence="1">Probably plays a role in the assembly of the spore coat proteins by catalyzing epsilon-(gamma-glutamyl)lysine cross-links.</text>
</comment>
<comment type="catalytic activity">
    <reaction evidence="1">
        <text>L-glutaminyl-[protein] + L-lysyl-[protein] = [protein]-L-lysyl-N(6)-5-L-glutamyl-[protein] + NH4(+)</text>
        <dbReference type="Rhea" id="RHEA:54816"/>
        <dbReference type="Rhea" id="RHEA-COMP:9752"/>
        <dbReference type="Rhea" id="RHEA-COMP:10207"/>
        <dbReference type="Rhea" id="RHEA-COMP:14005"/>
        <dbReference type="ChEBI" id="CHEBI:28938"/>
        <dbReference type="ChEBI" id="CHEBI:29969"/>
        <dbReference type="ChEBI" id="CHEBI:30011"/>
        <dbReference type="ChEBI" id="CHEBI:138370"/>
        <dbReference type="EC" id="2.3.2.13"/>
    </reaction>
</comment>
<comment type="similarity">
    <text evidence="1">Belongs to the bacillus TGase family.</text>
</comment>